<feature type="chain" id="PRO_1000201800" description="Octanoyltransferase">
    <location>
        <begin position="1"/>
        <end position="215"/>
    </location>
</feature>
<feature type="domain" description="BPL/LPL catalytic" evidence="2">
    <location>
        <begin position="31"/>
        <end position="206"/>
    </location>
</feature>
<feature type="active site" description="Acyl-thioester intermediate" evidence="1">
    <location>
        <position position="168"/>
    </location>
</feature>
<feature type="binding site" evidence="1">
    <location>
        <begin position="70"/>
        <end position="77"/>
    </location>
    <ligand>
        <name>substrate</name>
    </ligand>
</feature>
<feature type="binding site" evidence="1">
    <location>
        <begin position="137"/>
        <end position="139"/>
    </location>
    <ligand>
        <name>substrate</name>
    </ligand>
</feature>
<feature type="binding site" evidence="1">
    <location>
        <begin position="150"/>
        <end position="152"/>
    </location>
    <ligand>
        <name>substrate</name>
    </ligand>
</feature>
<feature type="site" description="Lowers pKa of active site Cys" evidence="1">
    <location>
        <position position="134"/>
    </location>
</feature>
<organism>
    <name type="scientific">Pseudomonas fluorescens (strain SBW25)</name>
    <dbReference type="NCBI Taxonomy" id="216595"/>
    <lineage>
        <taxon>Bacteria</taxon>
        <taxon>Pseudomonadati</taxon>
        <taxon>Pseudomonadota</taxon>
        <taxon>Gammaproteobacteria</taxon>
        <taxon>Pseudomonadales</taxon>
        <taxon>Pseudomonadaceae</taxon>
        <taxon>Pseudomonas</taxon>
    </lineage>
</organism>
<comment type="function">
    <text evidence="1">Catalyzes the transfer of endogenously produced octanoic acid from octanoyl-acyl-carrier-protein onto the lipoyl domains of lipoate-dependent enzymes. Lipoyl-ACP can also act as a substrate although octanoyl-ACP is likely to be the physiological substrate.</text>
</comment>
<comment type="catalytic activity">
    <reaction evidence="1">
        <text>octanoyl-[ACP] + L-lysyl-[protein] = N(6)-octanoyl-L-lysyl-[protein] + holo-[ACP] + H(+)</text>
        <dbReference type="Rhea" id="RHEA:17665"/>
        <dbReference type="Rhea" id="RHEA-COMP:9636"/>
        <dbReference type="Rhea" id="RHEA-COMP:9685"/>
        <dbReference type="Rhea" id="RHEA-COMP:9752"/>
        <dbReference type="Rhea" id="RHEA-COMP:9928"/>
        <dbReference type="ChEBI" id="CHEBI:15378"/>
        <dbReference type="ChEBI" id="CHEBI:29969"/>
        <dbReference type="ChEBI" id="CHEBI:64479"/>
        <dbReference type="ChEBI" id="CHEBI:78463"/>
        <dbReference type="ChEBI" id="CHEBI:78809"/>
        <dbReference type="EC" id="2.3.1.181"/>
    </reaction>
</comment>
<comment type="pathway">
    <text evidence="1">Protein modification; protein lipoylation via endogenous pathway; protein N(6)-(lipoyl)lysine from octanoyl-[acyl-carrier-protein]: step 1/2.</text>
</comment>
<comment type="subcellular location">
    <subcellularLocation>
        <location evidence="1">Cytoplasm</location>
    </subcellularLocation>
</comment>
<comment type="miscellaneous">
    <text evidence="1">In the reaction, the free carboxyl group of octanoic acid is attached via an amide linkage to the epsilon-amino group of a specific lysine residue of lipoyl domains of lipoate-dependent enzymes.</text>
</comment>
<comment type="similarity">
    <text evidence="1">Belongs to the LipB family.</text>
</comment>
<reference key="1">
    <citation type="journal article" date="2009" name="Genome Biol.">
        <title>Genomic and genetic analyses of diversity and plant interactions of Pseudomonas fluorescens.</title>
        <authorList>
            <person name="Silby M.W."/>
            <person name="Cerdeno-Tarraga A.M."/>
            <person name="Vernikos G.S."/>
            <person name="Giddens S.R."/>
            <person name="Jackson R.W."/>
            <person name="Preston G.M."/>
            <person name="Zhang X.-X."/>
            <person name="Moon C.D."/>
            <person name="Gehrig S.M."/>
            <person name="Godfrey S.A.C."/>
            <person name="Knight C.G."/>
            <person name="Malone J.G."/>
            <person name="Robinson Z."/>
            <person name="Spiers A.J."/>
            <person name="Harris S."/>
            <person name="Challis G.L."/>
            <person name="Yaxley A.M."/>
            <person name="Harris D."/>
            <person name="Seeger K."/>
            <person name="Murphy L."/>
            <person name="Rutter S."/>
            <person name="Squares R."/>
            <person name="Quail M.A."/>
            <person name="Saunders E."/>
            <person name="Mavromatis K."/>
            <person name="Brettin T.S."/>
            <person name="Bentley S.D."/>
            <person name="Hothersall J."/>
            <person name="Stephens E."/>
            <person name="Thomas C.M."/>
            <person name="Parkhill J."/>
            <person name="Levy S.B."/>
            <person name="Rainey P.B."/>
            <person name="Thomson N.R."/>
        </authorList>
    </citation>
    <scope>NUCLEOTIDE SEQUENCE [LARGE SCALE GENOMIC DNA]</scope>
    <source>
        <strain>SBW25</strain>
    </source>
</reference>
<accession>C3K2L9</accession>
<keyword id="KW-0012">Acyltransferase</keyword>
<keyword id="KW-0963">Cytoplasm</keyword>
<keyword id="KW-0808">Transferase</keyword>
<gene>
    <name evidence="1" type="primary">lipB</name>
    <name type="ordered locus">PFLU_5417</name>
</gene>
<name>LIPB_PSEFS</name>
<sequence>MSHVLGFRELGRMDYEPVWHAMQRFTNERGTSAEDEIWLVEHPPVFTQGQAGKAEHLLLPGDIPVVQVDRGGQVTYHGPGQLVAYLLLDVRKLGFGVRDLVSRMEACLIELLASYGVTAAAKPDAPGVYVDGAKIASLGLRIRHGCSFHGLALNVDMDLAPFRRINPCGYAGLAMTQLSDHATPIKFAEVSARLRAQLVKHLDYAEQTTLTGGID</sequence>
<proteinExistence type="inferred from homology"/>
<evidence type="ECO:0000255" key="1">
    <source>
        <dbReference type="HAMAP-Rule" id="MF_00013"/>
    </source>
</evidence>
<evidence type="ECO:0000255" key="2">
    <source>
        <dbReference type="PROSITE-ProRule" id="PRU01067"/>
    </source>
</evidence>
<dbReference type="EC" id="2.3.1.181" evidence="1"/>
<dbReference type="EMBL" id="AM181176">
    <property type="protein sequence ID" value="CAY52591.1"/>
    <property type="molecule type" value="Genomic_DNA"/>
</dbReference>
<dbReference type="RefSeq" id="WP_015886060.1">
    <property type="nucleotide sequence ID" value="NC_012660.1"/>
</dbReference>
<dbReference type="SMR" id="C3K2L9"/>
<dbReference type="STRING" id="294.SRM1_05039"/>
<dbReference type="GeneID" id="93467039"/>
<dbReference type="PATRIC" id="fig|216595.4.peg.5540"/>
<dbReference type="eggNOG" id="COG0321">
    <property type="taxonomic scope" value="Bacteria"/>
</dbReference>
<dbReference type="HOGENOM" id="CLU_035168_3_1_6"/>
<dbReference type="OrthoDB" id="9787061at2"/>
<dbReference type="UniPathway" id="UPA00538">
    <property type="reaction ID" value="UER00592"/>
</dbReference>
<dbReference type="GO" id="GO:0005737">
    <property type="term" value="C:cytoplasm"/>
    <property type="evidence" value="ECO:0007669"/>
    <property type="project" value="UniProtKB-SubCell"/>
</dbReference>
<dbReference type="GO" id="GO:0033819">
    <property type="term" value="F:lipoyl(octanoyl) transferase activity"/>
    <property type="evidence" value="ECO:0007669"/>
    <property type="project" value="UniProtKB-EC"/>
</dbReference>
<dbReference type="GO" id="GO:0036211">
    <property type="term" value="P:protein modification process"/>
    <property type="evidence" value="ECO:0007669"/>
    <property type="project" value="InterPro"/>
</dbReference>
<dbReference type="CDD" id="cd16444">
    <property type="entry name" value="LipB"/>
    <property type="match status" value="1"/>
</dbReference>
<dbReference type="FunFam" id="3.30.930.10:FF:000020">
    <property type="entry name" value="Octanoyltransferase"/>
    <property type="match status" value="1"/>
</dbReference>
<dbReference type="Gene3D" id="3.30.930.10">
    <property type="entry name" value="Bira Bifunctional Protein, Domain 2"/>
    <property type="match status" value="1"/>
</dbReference>
<dbReference type="HAMAP" id="MF_00013">
    <property type="entry name" value="LipB"/>
    <property type="match status" value="1"/>
</dbReference>
<dbReference type="InterPro" id="IPR045864">
    <property type="entry name" value="aa-tRNA-synth_II/BPL/LPL"/>
</dbReference>
<dbReference type="InterPro" id="IPR004143">
    <property type="entry name" value="BPL_LPL_catalytic"/>
</dbReference>
<dbReference type="InterPro" id="IPR000544">
    <property type="entry name" value="Octanoyltransferase"/>
</dbReference>
<dbReference type="InterPro" id="IPR020605">
    <property type="entry name" value="Octanoyltransferase_CS"/>
</dbReference>
<dbReference type="NCBIfam" id="TIGR00214">
    <property type="entry name" value="lipB"/>
    <property type="match status" value="1"/>
</dbReference>
<dbReference type="NCBIfam" id="NF010922">
    <property type="entry name" value="PRK14342.1"/>
    <property type="match status" value="1"/>
</dbReference>
<dbReference type="PANTHER" id="PTHR10993:SF7">
    <property type="entry name" value="LIPOYLTRANSFERASE 2, MITOCHONDRIAL-RELATED"/>
    <property type="match status" value="1"/>
</dbReference>
<dbReference type="PANTHER" id="PTHR10993">
    <property type="entry name" value="OCTANOYLTRANSFERASE"/>
    <property type="match status" value="1"/>
</dbReference>
<dbReference type="Pfam" id="PF21948">
    <property type="entry name" value="LplA-B_cat"/>
    <property type="match status" value="1"/>
</dbReference>
<dbReference type="PIRSF" id="PIRSF016262">
    <property type="entry name" value="LPLase"/>
    <property type="match status" value="1"/>
</dbReference>
<dbReference type="SUPFAM" id="SSF55681">
    <property type="entry name" value="Class II aaRS and biotin synthetases"/>
    <property type="match status" value="1"/>
</dbReference>
<dbReference type="PROSITE" id="PS51733">
    <property type="entry name" value="BPL_LPL_CATALYTIC"/>
    <property type="match status" value="1"/>
</dbReference>
<dbReference type="PROSITE" id="PS01313">
    <property type="entry name" value="LIPB"/>
    <property type="match status" value="1"/>
</dbReference>
<protein>
    <recommendedName>
        <fullName evidence="1">Octanoyltransferase</fullName>
        <ecNumber evidence="1">2.3.1.181</ecNumber>
    </recommendedName>
    <alternativeName>
        <fullName evidence="1">Lipoate-protein ligase B</fullName>
    </alternativeName>
    <alternativeName>
        <fullName evidence="1">Lipoyl/octanoyl transferase</fullName>
    </alternativeName>
    <alternativeName>
        <fullName evidence="1">Octanoyl-[acyl-carrier-protein]-protein N-octanoyltransferase</fullName>
    </alternativeName>
</protein>